<feature type="chain" id="PRO_0000174668" description="Amyloid protein A">
    <location>
        <begin position="1"/>
        <end position="76"/>
    </location>
</feature>
<proteinExistence type="evidence at protein level"/>
<dbReference type="PIR" id="A03198">
    <property type="entry name" value="YLMQAR"/>
</dbReference>
<dbReference type="SMR" id="P02738"/>
<dbReference type="STRING" id="9544.ENSMMUP00000014634"/>
<dbReference type="PaxDb" id="9544-ENSMMUP00000014635"/>
<dbReference type="eggNOG" id="ENOG502S4PB">
    <property type="taxonomic scope" value="Eukaryota"/>
</dbReference>
<dbReference type="InParanoid" id="P02738"/>
<dbReference type="Proteomes" id="UP000006718">
    <property type="component" value="Unassembled WGS sequence"/>
</dbReference>
<dbReference type="GO" id="GO:0034364">
    <property type="term" value="C:high-density lipoprotein particle"/>
    <property type="evidence" value="ECO:0007669"/>
    <property type="project" value="UniProtKB-KW"/>
</dbReference>
<dbReference type="GO" id="GO:0006953">
    <property type="term" value="P:acute-phase response"/>
    <property type="evidence" value="ECO:0007669"/>
    <property type="project" value="UniProtKB-KW"/>
</dbReference>
<dbReference type="FunFam" id="1.10.132.110:FF:000002">
    <property type="entry name" value="Amyloid protein A"/>
    <property type="match status" value="1"/>
</dbReference>
<dbReference type="Gene3D" id="1.10.132.110">
    <property type="entry name" value="Serum amyloid A protein"/>
    <property type="match status" value="1"/>
</dbReference>
<dbReference type="InterPro" id="IPR000096">
    <property type="entry name" value="Serum_amyloid_A"/>
</dbReference>
<dbReference type="InterPro" id="IPR052464">
    <property type="entry name" value="Synovial_Prolif_Regulator"/>
</dbReference>
<dbReference type="PANTHER" id="PTHR23424">
    <property type="entry name" value="SERUM AMYLOID A"/>
    <property type="match status" value="1"/>
</dbReference>
<dbReference type="PANTHER" id="PTHR23424:SF29">
    <property type="entry name" value="SERUM AMYLOID A PROTEIN"/>
    <property type="match status" value="1"/>
</dbReference>
<dbReference type="Pfam" id="PF00277">
    <property type="entry name" value="SAA"/>
    <property type="match status" value="1"/>
</dbReference>
<dbReference type="PRINTS" id="PR00306">
    <property type="entry name" value="SERUMAMYLOID"/>
</dbReference>
<dbReference type="SMART" id="SM00197">
    <property type="entry name" value="SAA"/>
    <property type="match status" value="1"/>
</dbReference>
<dbReference type="PROSITE" id="PS00992">
    <property type="entry name" value="SAA"/>
    <property type="match status" value="1"/>
</dbReference>
<protein>
    <recommendedName>
        <fullName>Amyloid protein A</fullName>
    </recommendedName>
    <alternativeName>
        <fullName>Amyloid fibril protein AA</fullName>
    </alternativeName>
</protein>
<evidence type="ECO:0000305" key="1"/>
<comment type="function">
    <text>Major acute phase reactant. Apolipoprotein of the HDL complex.</text>
</comment>
<comment type="subcellular location">
    <subcellularLocation>
        <location>Secreted</location>
    </subcellularLocation>
</comment>
<comment type="tissue specificity">
    <text>Expressed by the liver; secreted in plasma.</text>
</comment>
<comment type="induction">
    <text>Upon cytokine stimulation.</text>
</comment>
<comment type="disease">
    <text>Reactive, secondary amyloidosis is characterized by the extracellular accumulation in various tissues of the SAA protein. These deposits are highly insoluble and resistant to proteolysis; they disrupt tissue structure and compromise function.</text>
</comment>
<comment type="similarity">
    <text evidence="1">Belongs to the SAA family.</text>
</comment>
<organism>
    <name type="scientific">Macaca mulatta</name>
    <name type="common">Rhesus macaque</name>
    <dbReference type="NCBI Taxonomy" id="9544"/>
    <lineage>
        <taxon>Eukaryota</taxon>
        <taxon>Metazoa</taxon>
        <taxon>Chordata</taxon>
        <taxon>Craniata</taxon>
        <taxon>Vertebrata</taxon>
        <taxon>Euteleostomi</taxon>
        <taxon>Mammalia</taxon>
        <taxon>Eutheria</taxon>
        <taxon>Euarchontoglires</taxon>
        <taxon>Primates</taxon>
        <taxon>Haplorrhini</taxon>
        <taxon>Catarrhini</taxon>
        <taxon>Cercopithecidae</taxon>
        <taxon>Cercopithecinae</taxon>
        <taxon>Macaca</taxon>
    </lineage>
</organism>
<reference key="1">
    <citation type="journal article" date="1972" name="Biochemistry">
        <title>Amino acid sequence of monkey amyloid protein A.</title>
        <authorList>
            <person name="Hermodson M.A."/>
            <person name="Kuhn R.W."/>
            <person name="Walsh K.A."/>
            <person name="Neurath H."/>
            <person name="Eriksen N."/>
            <person name="Benditt E.P."/>
        </authorList>
    </citation>
    <scope>PROTEIN SEQUENCE</scope>
</reference>
<gene>
    <name type="primary">SAA1</name>
</gene>
<sequence>RSWFSFLGEAYDGARDMWRAYSDMKEANYKNSDKYFHARGNYDAAQRGPGGVWAAEVISDARENIQKLLGHGAEDT</sequence>
<name>SAA_MACMU</name>
<keyword id="KW-0011">Acute phase</keyword>
<keyword id="KW-0034">Amyloid</keyword>
<keyword id="KW-0903">Direct protein sequencing</keyword>
<keyword id="KW-0345">HDL</keyword>
<keyword id="KW-1185">Reference proteome</keyword>
<keyword id="KW-0964">Secreted</keyword>
<accession>P02738</accession>